<geneLocation type="chloroplast"/>
<accession>Q6EM68</accession>
<accession>Q09FY7</accession>
<gene>
    <name type="primary">rps7-A</name>
</gene>
<gene>
    <name type="primary">rps7-B</name>
</gene>
<keyword id="KW-0150">Chloroplast</keyword>
<keyword id="KW-0934">Plastid</keyword>
<keyword id="KW-0687">Ribonucleoprotein</keyword>
<keyword id="KW-0689">Ribosomal protein</keyword>
<keyword id="KW-0694">RNA-binding</keyword>
<keyword id="KW-0699">rRNA-binding</keyword>
<sequence length="155" mass="17343">MSRRGTAEEKTAKSDPIYRNRLVNMLVNRILKHGKKSLAYQIIYRAVKKIQQKTETNPLSVLRQAIRGVTPDIAVKARRVGGSTHQVPIEIGSTQGKALAIRWLLGASRKRPGRNMAFKLSSELVDAAKGSGDAIRKKEETHRMAEANRAFAHFR</sequence>
<evidence type="ECO:0000250" key="1"/>
<evidence type="ECO:0000255" key="2">
    <source>
        <dbReference type="HAMAP-Rule" id="MF_00480"/>
    </source>
</evidence>
<evidence type="ECO:0000305" key="3"/>
<protein>
    <recommendedName>
        <fullName evidence="2">Small ribosomal subunit protein uS7cz/uS7cy</fullName>
    </recommendedName>
    <alternativeName>
        <fullName>30S ribosomal protein S7, chloroplastic</fullName>
    </alternativeName>
</protein>
<proteinExistence type="inferred from homology"/>
<reference key="1">
    <citation type="submission" date="2003-02" db="EMBL/GenBank/DDBJ databases">
        <title>Parsing out signal and noise for seed-plant phylogenetic inference.</title>
        <authorList>
            <person name="Graham S.W."/>
            <person name="Rai H.S."/>
            <person name="Ikegami K."/>
            <person name="Reeves P.A."/>
            <person name="Olmstead R.G."/>
        </authorList>
    </citation>
    <scope>NUCLEOTIDE SEQUENCE [GENOMIC DNA]</scope>
</reference>
<reference key="2">
    <citation type="journal article" date="2006" name="BMC Plant Biol.">
        <title>Rapid and accurate pyrosequencing of angiosperm plastid genomes.</title>
        <authorList>
            <person name="Moore M.J."/>
            <person name="Dhingra A."/>
            <person name="Soltis P.S."/>
            <person name="Shaw R."/>
            <person name="Farmerie W.G."/>
            <person name="Folta K.M."/>
            <person name="Soltis D.E."/>
        </authorList>
    </citation>
    <scope>NUCLEOTIDE SEQUENCE [LARGE SCALE GENOMIC DNA]</scope>
</reference>
<feature type="chain" id="PRO_0000124492" description="Small ribosomal subunit protein uS7cz/uS7cy">
    <location>
        <begin position="1"/>
        <end position="155"/>
    </location>
</feature>
<dbReference type="EMBL" id="AY237146">
    <property type="protein sequence ID" value="AAQ64573.1"/>
    <property type="molecule type" value="Genomic_DNA"/>
</dbReference>
<dbReference type="EMBL" id="DQ923116">
    <property type="protein sequence ID" value="ABI49825.1"/>
    <property type="molecule type" value="Genomic_DNA"/>
</dbReference>
<dbReference type="EMBL" id="DQ923116">
    <property type="protein sequence ID" value="ABI49838.1"/>
    <property type="molecule type" value="Genomic_DNA"/>
</dbReference>
<dbReference type="SMR" id="Q6EM68"/>
<dbReference type="GO" id="GO:0009507">
    <property type="term" value="C:chloroplast"/>
    <property type="evidence" value="ECO:0007669"/>
    <property type="project" value="UniProtKB-SubCell"/>
</dbReference>
<dbReference type="GO" id="GO:0015935">
    <property type="term" value="C:small ribosomal subunit"/>
    <property type="evidence" value="ECO:0007669"/>
    <property type="project" value="InterPro"/>
</dbReference>
<dbReference type="GO" id="GO:0019843">
    <property type="term" value="F:rRNA binding"/>
    <property type="evidence" value="ECO:0007669"/>
    <property type="project" value="UniProtKB-UniRule"/>
</dbReference>
<dbReference type="GO" id="GO:0003735">
    <property type="term" value="F:structural constituent of ribosome"/>
    <property type="evidence" value="ECO:0007669"/>
    <property type="project" value="InterPro"/>
</dbReference>
<dbReference type="GO" id="GO:0006412">
    <property type="term" value="P:translation"/>
    <property type="evidence" value="ECO:0007669"/>
    <property type="project" value="UniProtKB-UniRule"/>
</dbReference>
<dbReference type="CDD" id="cd14871">
    <property type="entry name" value="uS7_Chloroplast"/>
    <property type="match status" value="1"/>
</dbReference>
<dbReference type="FunFam" id="1.10.455.10:FF:000001">
    <property type="entry name" value="30S ribosomal protein S7"/>
    <property type="match status" value="1"/>
</dbReference>
<dbReference type="Gene3D" id="1.10.455.10">
    <property type="entry name" value="Ribosomal protein S7 domain"/>
    <property type="match status" value="1"/>
</dbReference>
<dbReference type="HAMAP" id="MF_00480_B">
    <property type="entry name" value="Ribosomal_uS7_B"/>
    <property type="match status" value="1"/>
</dbReference>
<dbReference type="InterPro" id="IPR000235">
    <property type="entry name" value="Ribosomal_uS7"/>
</dbReference>
<dbReference type="InterPro" id="IPR005717">
    <property type="entry name" value="Ribosomal_uS7_bac/org-type"/>
</dbReference>
<dbReference type="InterPro" id="IPR020606">
    <property type="entry name" value="Ribosomal_uS7_CS"/>
</dbReference>
<dbReference type="InterPro" id="IPR023798">
    <property type="entry name" value="Ribosomal_uS7_dom"/>
</dbReference>
<dbReference type="InterPro" id="IPR036823">
    <property type="entry name" value="Ribosomal_uS7_dom_sf"/>
</dbReference>
<dbReference type="NCBIfam" id="TIGR01029">
    <property type="entry name" value="rpsG_bact"/>
    <property type="match status" value="1"/>
</dbReference>
<dbReference type="PANTHER" id="PTHR11205">
    <property type="entry name" value="RIBOSOMAL PROTEIN S7"/>
    <property type="match status" value="1"/>
</dbReference>
<dbReference type="Pfam" id="PF00177">
    <property type="entry name" value="Ribosomal_S7"/>
    <property type="match status" value="1"/>
</dbReference>
<dbReference type="PIRSF" id="PIRSF002122">
    <property type="entry name" value="RPS7p_RPS7a_RPS5e_RPS7o"/>
    <property type="match status" value="1"/>
</dbReference>
<dbReference type="SUPFAM" id="SSF47973">
    <property type="entry name" value="Ribosomal protein S7"/>
    <property type="match status" value="1"/>
</dbReference>
<dbReference type="PROSITE" id="PS00052">
    <property type="entry name" value="RIBOSOMAL_S7"/>
    <property type="match status" value="1"/>
</dbReference>
<comment type="function">
    <text evidence="1">One of the primary rRNA binding proteins, it binds directly to 16S rRNA where it nucleates assembly of the head domain of the 30S subunit.</text>
</comment>
<comment type="subunit">
    <text>Part of the 30S ribosomal subunit.</text>
</comment>
<comment type="subcellular location">
    <subcellularLocation>
        <location>Plastid</location>
        <location>Chloroplast</location>
    </subcellularLocation>
</comment>
<comment type="similarity">
    <text evidence="3">Belongs to the universal ribosomal protein uS7 family.</text>
</comment>
<name>RR7_PLAOC</name>
<organism>
    <name type="scientific">Platanus occidentalis</name>
    <name type="common">Sycamore</name>
    <name type="synonym">American plane tree</name>
    <dbReference type="NCBI Taxonomy" id="4403"/>
    <lineage>
        <taxon>Eukaryota</taxon>
        <taxon>Viridiplantae</taxon>
        <taxon>Streptophyta</taxon>
        <taxon>Embryophyta</taxon>
        <taxon>Tracheophyta</taxon>
        <taxon>Spermatophyta</taxon>
        <taxon>Magnoliopsida</taxon>
        <taxon>Proteales</taxon>
        <taxon>Platanaceae</taxon>
        <taxon>Platanus</taxon>
    </lineage>
</organism>